<evidence type="ECO:0000250" key="1"/>
<evidence type="ECO:0000255" key="2"/>
<evidence type="ECO:0000255" key="3">
    <source>
        <dbReference type="PROSITE-ProRule" id="PRU00175"/>
    </source>
</evidence>
<evidence type="ECO:0000305" key="4"/>
<sequence length="390" mass="45014">MNSPQEISILFFFIIFLDYVSAQSPPPPNLYATSDLFKPSLAIITGVFSIVFTLTFVLLVYAKCFHNDLRSETDSDGERIRHDRLWQGLFNRSSRFSGLDKKAIESLPFFRFSALKGLKQGLECSVCLSKFEDVEILRLLPKCRHAFHIGCIDQWLEQHATCPLCRNRVNIEDDLSVLGNSSTSLRILNQSETREEDSRLEIYIEREEGTNDGSSRFSSFRKILKKSLLLEREGNENIDEKKLMHKFNHRIVVSDAVFKNRWSNITSSDLTFLTSEMLNSVSSDRFSSVDRVHRGNLRDKEDMEMKRMLIKHKDSSRRTVSEITTVSREKAVGGSYRGSTASTSQNYAVTATTEERRRRLWLPIARRTAQWFVNREKSNDLNTTRQNLNV</sequence>
<keyword id="KW-0472">Membrane</keyword>
<keyword id="KW-0479">Metal-binding</keyword>
<keyword id="KW-1185">Reference proteome</keyword>
<keyword id="KW-0732">Signal</keyword>
<keyword id="KW-0808">Transferase</keyword>
<keyword id="KW-0812">Transmembrane</keyword>
<keyword id="KW-1133">Transmembrane helix</keyword>
<keyword id="KW-0833">Ubl conjugation pathway</keyword>
<keyword id="KW-0862">Zinc</keyword>
<keyword id="KW-0863">Zinc-finger</keyword>
<proteinExistence type="inferred from homology"/>
<accession>Q9SL78</accession>
<comment type="catalytic activity">
    <reaction evidence="4">
        <text>S-ubiquitinyl-[E2 ubiquitin-conjugating enzyme]-L-cysteine + [acceptor protein]-L-lysine = [E2 ubiquitin-conjugating enzyme]-L-cysteine + N(6)-ubiquitinyl-[acceptor protein]-L-lysine.</text>
        <dbReference type="EC" id="2.3.2.27"/>
    </reaction>
</comment>
<comment type="pathway">
    <text>Protein modification; protein ubiquitination.</text>
</comment>
<comment type="subcellular location">
    <subcellularLocation>
        <location evidence="4">Membrane</location>
        <topology evidence="4">Single-pass membrane protein</topology>
    </subcellularLocation>
</comment>
<comment type="domain">
    <text evidence="1">The RING-type zinc finger domain mediates binding to an E2 ubiquitin-conjugating enzyme.</text>
</comment>
<comment type="similarity">
    <text evidence="4">Belongs to the RING-type zinc finger family. ATL subfamily.</text>
</comment>
<protein>
    <recommendedName>
        <fullName>Putative RING-H2 finger protein ATL12</fullName>
        <ecNumber evidence="4">2.3.2.27</ecNumber>
    </recommendedName>
    <alternativeName>
        <fullName evidence="4">RING-type E3 ubiquitin transferase ATL12</fullName>
    </alternativeName>
</protein>
<gene>
    <name type="primary">ATL12</name>
    <name type="ordered locus">At2g20030</name>
    <name type="ORF">T2G17.17</name>
</gene>
<reference key="1">
    <citation type="journal article" date="1999" name="Nature">
        <title>Sequence and analysis of chromosome 2 of the plant Arabidopsis thaliana.</title>
        <authorList>
            <person name="Lin X."/>
            <person name="Kaul S."/>
            <person name="Rounsley S.D."/>
            <person name="Shea T.P."/>
            <person name="Benito M.-I."/>
            <person name="Town C.D."/>
            <person name="Fujii C.Y."/>
            <person name="Mason T.M."/>
            <person name="Bowman C.L."/>
            <person name="Barnstead M.E."/>
            <person name="Feldblyum T.V."/>
            <person name="Buell C.R."/>
            <person name="Ketchum K.A."/>
            <person name="Lee J.J."/>
            <person name="Ronning C.M."/>
            <person name="Koo H.L."/>
            <person name="Moffat K.S."/>
            <person name="Cronin L.A."/>
            <person name="Shen M."/>
            <person name="Pai G."/>
            <person name="Van Aken S."/>
            <person name="Umayam L."/>
            <person name="Tallon L.J."/>
            <person name="Gill J.E."/>
            <person name="Adams M.D."/>
            <person name="Carrera A.J."/>
            <person name="Creasy T.H."/>
            <person name="Goodman H.M."/>
            <person name="Somerville C.R."/>
            <person name="Copenhaver G.P."/>
            <person name="Preuss D."/>
            <person name="Nierman W.C."/>
            <person name="White O."/>
            <person name="Eisen J.A."/>
            <person name="Salzberg S.L."/>
            <person name="Fraser C.M."/>
            <person name="Venter J.C."/>
        </authorList>
    </citation>
    <scope>NUCLEOTIDE SEQUENCE [LARGE SCALE GENOMIC DNA]</scope>
    <source>
        <strain>cv. Columbia</strain>
    </source>
</reference>
<reference key="2">
    <citation type="journal article" date="2017" name="Plant J.">
        <title>Araport11: a complete reannotation of the Arabidopsis thaliana reference genome.</title>
        <authorList>
            <person name="Cheng C.Y."/>
            <person name="Krishnakumar V."/>
            <person name="Chan A.P."/>
            <person name="Thibaud-Nissen F."/>
            <person name="Schobel S."/>
            <person name="Town C.D."/>
        </authorList>
    </citation>
    <scope>GENOME REANNOTATION</scope>
    <source>
        <strain>cv. Columbia</strain>
    </source>
</reference>
<reference key="3">
    <citation type="journal article" date="2002" name="Genome Biol.">
        <title>Evaluation and classification of RING-finger domains encoded by the Arabidopsis genome.</title>
        <authorList>
            <person name="Kosarev P."/>
            <person name="Mayer K.F.X."/>
            <person name="Hardtke C.S."/>
        </authorList>
    </citation>
    <scope>GENE FAMILY ORGANIZATION</scope>
</reference>
<reference key="4">
    <citation type="journal article" date="2004" name="Genetics">
        <title>Isolation and gene expression analysis of Arabidopsis thaliana mutants with constitutive expression of ATL2, an early elicitor-response RING-H2 zinc-finger gene.</title>
        <authorList>
            <person name="Serrano M."/>
            <person name="Guzman P."/>
        </authorList>
    </citation>
    <scope>IDENTIFICATION</scope>
</reference>
<reference key="5">
    <citation type="journal article" date="2006" name="J. Mol. Evol.">
        <title>The ATL gene family from Arabidopsis thaliana and Oryza sativa comprises a large number of putative ubiquitin ligases of the RING-H2 type.</title>
        <authorList>
            <person name="Serrano M."/>
            <person name="Parra S."/>
            <person name="Alcaraz L.D."/>
            <person name="Guzman P."/>
        </authorList>
    </citation>
    <scope>NOMENCLATURE</scope>
    <scope>GENE FAMILY ORGANIZATION</scope>
</reference>
<dbReference type="EC" id="2.3.2.27" evidence="4"/>
<dbReference type="EMBL" id="AC006081">
    <property type="protein sequence ID" value="AAD24393.1"/>
    <property type="molecule type" value="Genomic_DNA"/>
</dbReference>
<dbReference type="EMBL" id="CP002685">
    <property type="protein sequence ID" value="AEC06957.1"/>
    <property type="molecule type" value="Genomic_DNA"/>
</dbReference>
<dbReference type="PIR" id="B84584">
    <property type="entry name" value="B84584"/>
</dbReference>
<dbReference type="RefSeq" id="NP_179593.1">
    <property type="nucleotide sequence ID" value="NM_127561.2"/>
</dbReference>
<dbReference type="SMR" id="Q9SL78"/>
<dbReference type="BioGRID" id="1877">
    <property type="interactions" value="1"/>
</dbReference>
<dbReference type="FunCoup" id="Q9SL78">
    <property type="interactions" value="157"/>
</dbReference>
<dbReference type="STRING" id="3702.Q9SL78"/>
<dbReference type="PaxDb" id="3702-AT2G20030.1"/>
<dbReference type="ProteomicsDB" id="246551"/>
<dbReference type="EnsemblPlants" id="AT2G20030.1">
    <property type="protein sequence ID" value="AT2G20030.1"/>
    <property type="gene ID" value="AT2G20030"/>
</dbReference>
<dbReference type="GeneID" id="816522"/>
<dbReference type="Gramene" id="AT2G20030.1">
    <property type="protein sequence ID" value="AT2G20030.1"/>
    <property type="gene ID" value="AT2G20030"/>
</dbReference>
<dbReference type="KEGG" id="ath:AT2G20030"/>
<dbReference type="Araport" id="AT2G20030"/>
<dbReference type="TAIR" id="AT2G20030">
    <property type="gene designation" value="ATL12"/>
</dbReference>
<dbReference type="eggNOG" id="KOG0800">
    <property type="taxonomic scope" value="Eukaryota"/>
</dbReference>
<dbReference type="HOGENOM" id="CLU_046350_0_0_1"/>
<dbReference type="InParanoid" id="Q9SL78"/>
<dbReference type="OMA" id="WFAGQER"/>
<dbReference type="OrthoDB" id="8062037at2759"/>
<dbReference type="PhylomeDB" id="Q9SL78"/>
<dbReference type="UniPathway" id="UPA00143"/>
<dbReference type="PRO" id="PR:Q9SL78"/>
<dbReference type="Proteomes" id="UP000006548">
    <property type="component" value="Chromosome 2"/>
</dbReference>
<dbReference type="ExpressionAtlas" id="Q9SL78">
    <property type="expression patterns" value="baseline and differential"/>
</dbReference>
<dbReference type="GO" id="GO:0016020">
    <property type="term" value="C:membrane"/>
    <property type="evidence" value="ECO:0007669"/>
    <property type="project" value="UniProtKB-SubCell"/>
</dbReference>
<dbReference type="GO" id="GO:0016740">
    <property type="term" value="F:transferase activity"/>
    <property type="evidence" value="ECO:0007669"/>
    <property type="project" value="UniProtKB-KW"/>
</dbReference>
<dbReference type="GO" id="GO:0008270">
    <property type="term" value="F:zinc ion binding"/>
    <property type="evidence" value="ECO:0007669"/>
    <property type="project" value="UniProtKB-KW"/>
</dbReference>
<dbReference type="GO" id="GO:0016567">
    <property type="term" value="P:protein ubiquitination"/>
    <property type="evidence" value="ECO:0007669"/>
    <property type="project" value="UniProtKB-UniPathway"/>
</dbReference>
<dbReference type="CDD" id="cd16461">
    <property type="entry name" value="RING-H2_EL5-like"/>
    <property type="match status" value="1"/>
</dbReference>
<dbReference type="FunFam" id="3.30.40.10:FF:000285">
    <property type="entry name" value="RING-H2 finger protein ATL43"/>
    <property type="match status" value="1"/>
</dbReference>
<dbReference type="Gene3D" id="3.30.40.10">
    <property type="entry name" value="Zinc/RING finger domain, C3HC4 (zinc finger)"/>
    <property type="match status" value="1"/>
</dbReference>
<dbReference type="InterPro" id="IPR001841">
    <property type="entry name" value="Znf_RING"/>
</dbReference>
<dbReference type="InterPro" id="IPR013083">
    <property type="entry name" value="Znf_RING/FYVE/PHD"/>
</dbReference>
<dbReference type="PANTHER" id="PTHR46539">
    <property type="entry name" value="E3 UBIQUITIN-PROTEIN LIGASE ATL42"/>
    <property type="match status" value="1"/>
</dbReference>
<dbReference type="PANTHER" id="PTHR46539:SF10">
    <property type="entry name" value="RING-H2 FINGER PROTEIN ATL12-RELATED"/>
    <property type="match status" value="1"/>
</dbReference>
<dbReference type="Pfam" id="PF13639">
    <property type="entry name" value="zf-RING_2"/>
    <property type="match status" value="1"/>
</dbReference>
<dbReference type="SMART" id="SM00184">
    <property type="entry name" value="RING"/>
    <property type="match status" value="1"/>
</dbReference>
<dbReference type="SUPFAM" id="SSF57850">
    <property type="entry name" value="RING/U-box"/>
    <property type="match status" value="1"/>
</dbReference>
<dbReference type="PROSITE" id="PS50089">
    <property type="entry name" value="ZF_RING_2"/>
    <property type="match status" value="1"/>
</dbReference>
<organism>
    <name type="scientific">Arabidopsis thaliana</name>
    <name type="common">Mouse-ear cress</name>
    <dbReference type="NCBI Taxonomy" id="3702"/>
    <lineage>
        <taxon>Eukaryota</taxon>
        <taxon>Viridiplantae</taxon>
        <taxon>Streptophyta</taxon>
        <taxon>Embryophyta</taxon>
        <taxon>Tracheophyta</taxon>
        <taxon>Spermatophyta</taxon>
        <taxon>Magnoliopsida</taxon>
        <taxon>eudicotyledons</taxon>
        <taxon>Gunneridae</taxon>
        <taxon>Pentapetalae</taxon>
        <taxon>rosids</taxon>
        <taxon>malvids</taxon>
        <taxon>Brassicales</taxon>
        <taxon>Brassicaceae</taxon>
        <taxon>Camelineae</taxon>
        <taxon>Arabidopsis</taxon>
    </lineage>
</organism>
<name>ATL12_ARATH</name>
<feature type="signal peptide" evidence="2">
    <location>
        <begin position="1"/>
        <end position="22"/>
    </location>
</feature>
<feature type="chain" id="PRO_0000030705" description="Putative RING-H2 finger protein ATL12">
    <location>
        <begin position="23"/>
        <end position="390"/>
    </location>
</feature>
<feature type="transmembrane region" description="Helical" evidence="2">
    <location>
        <begin position="41"/>
        <end position="61"/>
    </location>
</feature>
<feature type="zinc finger region" description="RING-type; atypical" evidence="3">
    <location>
        <begin position="124"/>
        <end position="166"/>
    </location>
</feature>